<keyword id="KW-1015">Disulfide bond</keyword>
<keyword id="KW-0472">Membrane</keyword>
<keyword id="KW-0496">Mitochondrion</keyword>
<keyword id="KW-0999">Mitochondrion inner membrane</keyword>
<keyword id="KW-0560">Oxidoreductase</keyword>
<keyword id="KW-0653">Protein transport</keyword>
<keyword id="KW-0676">Redox-active center</keyword>
<keyword id="KW-1185">Reference proteome</keyword>
<keyword id="KW-0735">Signal-anchor</keyword>
<keyword id="KW-0809">Transit peptide</keyword>
<keyword id="KW-0811">Translocation</keyword>
<keyword id="KW-0812">Transmembrane</keyword>
<keyword id="KW-1133">Transmembrane helix</keyword>
<keyword id="KW-0813">Transport</keyword>
<accession>O94030</accession>
<accession>A0A1D8PCV5</accession>
<accession>Q5AI77</accession>
<organism>
    <name type="scientific">Candida albicans (strain SC5314 / ATCC MYA-2876)</name>
    <name type="common">Yeast</name>
    <dbReference type="NCBI Taxonomy" id="237561"/>
    <lineage>
        <taxon>Eukaryota</taxon>
        <taxon>Fungi</taxon>
        <taxon>Dikarya</taxon>
        <taxon>Ascomycota</taxon>
        <taxon>Saccharomycotina</taxon>
        <taxon>Pichiomycetes</taxon>
        <taxon>Debaryomycetaceae</taxon>
        <taxon>Candida/Lodderomyces clade</taxon>
        <taxon>Candida</taxon>
    </lineage>
</organism>
<gene>
    <name type="primary">MIA40</name>
    <name type="synonym">TIM40</name>
    <name type="ordered locus">CAALFM_C102880CA</name>
    <name type="ORF">Ca49C10.16</name>
    <name type="ORF">CaO19.10494</name>
    <name type="ORF">CaO19.2977</name>
</gene>
<protein>
    <recommendedName>
        <fullName>Mitochondrial intermembrane space import and assembly protein 40</fullName>
    </recommendedName>
    <alternativeName>
        <fullName>Mitochondrial import inner membrane translocase TIM40</fullName>
    </alternativeName>
</protein>
<proteinExistence type="inferred from homology"/>
<dbReference type="EMBL" id="AL033497">
    <property type="protein sequence ID" value="CAA21980.1"/>
    <property type="molecule type" value="Genomic_DNA"/>
</dbReference>
<dbReference type="EMBL" id="CP017623">
    <property type="protein sequence ID" value="AOW25969.1"/>
    <property type="molecule type" value="Genomic_DNA"/>
</dbReference>
<dbReference type="PIR" id="T52160">
    <property type="entry name" value="T52160"/>
</dbReference>
<dbReference type="RefSeq" id="XP_721476.1">
    <property type="nucleotide sequence ID" value="XM_716383.2"/>
</dbReference>
<dbReference type="SMR" id="O94030"/>
<dbReference type="STRING" id="237561.O94030"/>
<dbReference type="EnsemblFungi" id="C1_02880C_A-T">
    <property type="protein sequence ID" value="C1_02880C_A-T-p1"/>
    <property type="gene ID" value="C1_02880C_A"/>
</dbReference>
<dbReference type="GeneID" id="3636866"/>
<dbReference type="KEGG" id="cal:CAALFM_C102880CA"/>
<dbReference type="CGD" id="CAL0000191454">
    <property type="gene designation" value="MIA40"/>
</dbReference>
<dbReference type="VEuPathDB" id="FungiDB:C1_02880C_A"/>
<dbReference type="eggNOG" id="KOG4149">
    <property type="taxonomic scope" value="Eukaryota"/>
</dbReference>
<dbReference type="HOGENOM" id="CLU_054990_1_0_1"/>
<dbReference type="InParanoid" id="O94030"/>
<dbReference type="OMA" id="CFKRYPE"/>
<dbReference type="OrthoDB" id="7481291at2759"/>
<dbReference type="PRO" id="PR:O94030"/>
<dbReference type="Proteomes" id="UP000000559">
    <property type="component" value="Chromosome 1"/>
</dbReference>
<dbReference type="GO" id="GO:0005743">
    <property type="term" value="C:mitochondrial inner membrane"/>
    <property type="evidence" value="ECO:0007669"/>
    <property type="project" value="UniProtKB-SubCell"/>
</dbReference>
<dbReference type="GO" id="GO:0005758">
    <property type="term" value="C:mitochondrial intermembrane space"/>
    <property type="evidence" value="ECO:0000318"/>
    <property type="project" value="GO_Central"/>
</dbReference>
<dbReference type="GO" id="GO:0015035">
    <property type="term" value="F:protein-disulfide reductase activity"/>
    <property type="evidence" value="ECO:0000318"/>
    <property type="project" value="GO_Central"/>
</dbReference>
<dbReference type="GO" id="GO:0045041">
    <property type="term" value="P:protein import into mitochondrial intermembrane space"/>
    <property type="evidence" value="ECO:0000318"/>
    <property type="project" value="GO_Central"/>
</dbReference>
<dbReference type="FunFam" id="1.10.287.2900:FF:000002">
    <property type="entry name" value="Mitochondrial intermembrane space import and assembly protein"/>
    <property type="match status" value="1"/>
</dbReference>
<dbReference type="Gene3D" id="1.10.287.2900">
    <property type="match status" value="1"/>
</dbReference>
<dbReference type="InterPro" id="IPR010625">
    <property type="entry name" value="CHCH"/>
</dbReference>
<dbReference type="InterPro" id="IPR039289">
    <property type="entry name" value="CHCHD4"/>
</dbReference>
<dbReference type="PANTHER" id="PTHR21622">
    <property type="entry name" value="COILED-COIL-HELIX-COILED-COIL-HELIX DOMAIN CONTAINING 4"/>
    <property type="match status" value="1"/>
</dbReference>
<dbReference type="PANTHER" id="PTHR21622:SF0">
    <property type="entry name" value="COILED-COIL-HELIX-COILED-COIL-HELIX DOMAIN CONTAINING 4"/>
    <property type="match status" value="1"/>
</dbReference>
<dbReference type="Pfam" id="PF06747">
    <property type="entry name" value="CHCH"/>
    <property type="match status" value="1"/>
</dbReference>
<dbReference type="PROSITE" id="PS51808">
    <property type="entry name" value="CHCH"/>
    <property type="match status" value="1"/>
</dbReference>
<comment type="function">
    <text evidence="1">Required for the import and folding of small cysteine-containing proteins (small Tim) in the mitochondrial intermembrane space (IMS). Forms a redox cycle with ERV1 that involves a disulfide relay system. Precursor proteins to be imported into the IMS are translocated in their reduced form into the mitochondria. The oxidized form of MIA40 forms a transient intermolecular disulfide bridge with the reduced precursor protein, resulting in oxidation of the precursor protein that now contains an intramolecular disulfide bond and is able to undergo folding in the IMS (By similarity).</text>
</comment>
<comment type="cofactor">
    <cofactor evidence="1">
        <name>Cu(2+)</name>
        <dbReference type="ChEBI" id="CHEBI:29036"/>
    </cofactor>
    <cofactor evidence="1">
        <name>Zn(2+)</name>
        <dbReference type="ChEBI" id="CHEBI:29105"/>
    </cofactor>
    <text evidence="1">Cu(2+) or Zn(2+).</text>
</comment>
<comment type="subunit">
    <text evidence="1">Monomer.</text>
</comment>
<comment type="subcellular location">
    <subcellularLocation>
        <location evidence="1">Mitochondrion inner membrane</location>
        <topology evidence="1">Single-pass type II membrane protein</topology>
        <orientation evidence="1">Intermembrane side</orientation>
    </subcellularLocation>
</comment>
<comment type="domain">
    <text evidence="1">The CHCH domain contains a conserved twin Cys-X(9)-Cys motif which is required for import and stability of MIA40 in mitochondria.</text>
</comment>
<evidence type="ECO:0000250" key="1"/>
<evidence type="ECO:0000255" key="2"/>
<evidence type="ECO:0000255" key="3">
    <source>
        <dbReference type="PROSITE-ProRule" id="PRU01150"/>
    </source>
</evidence>
<evidence type="ECO:0000256" key="4">
    <source>
        <dbReference type="SAM" id="MobiDB-lite"/>
    </source>
</evidence>
<evidence type="ECO:0000305" key="5"/>
<sequence>MYRTISRSSSGLIRQSTARLTRQLSTTRTTPSQYNSKLLLGVLGTGALAFGYFSQQSSLIQNASTAENIEKVFEEGNAVAKDAQESLDARQEKVIKENEQKTKKAEDAKTSSESKANVADKKSNSQPEGEPEGEGKQEAAFNPDTGEINWDCPCLGGMAHGPCGEEFKEAFSCFVFSETEPKGIDCIKKFENMRSCFKRYPEHYKDELYDDGEEEASTEVVEHVVLETSEPAIEQIEQGIKEDKVKPNTKSD</sequence>
<feature type="transit peptide" description="Mitochondrion" evidence="2">
    <location>
        <begin position="1"/>
        <end position="31"/>
    </location>
</feature>
<feature type="chain" id="PRO_0000235285" description="Mitochondrial intermembrane space import and assembly protein 40">
    <location>
        <begin position="32"/>
        <end position="252"/>
    </location>
</feature>
<feature type="topological domain" description="Mitochondrial matrix" evidence="2">
    <location>
        <begin position="32"/>
        <end position="37"/>
    </location>
</feature>
<feature type="transmembrane region" description="Helical; Signal-anchor for type II membrane protein" evidence="2">
    <location>
        <begin position="38"/>
        <end position="54"/>
    </location>
</feature>
<feature type="topological domain" description="Mitochondrial intermembrane" evidence="2">
    <location>
        <begin position="55"/>
        <end position="252"/>
    </location>
</feature>
<feature type="domain" description="CHCH" evidence="3">
    <location>
        <begin position="160"/>
        <end position="204"/>
    </location>
</feature>
<feature type="region of interest" description="Disordered" evidence="4">
    <location>
        <begin position="90"/>
        <end position="143"/>
    </location>
</feature>
<feature type="region of interest" description="Disordered" evidence="4">
    <location>
        <begin position="230"/>
        <end position="252"/>
    </location>
</feature>
<feature type="short sequence motif" description="Cx9C motif 1" evidence="3">
    <location>
        <begin position="163"/>
        <end position="173"/>
    </location>
</feature>
<feature type="short sequence motif" description="Cx9C motif 2" evidence="3">
    <location>
        <begin position="186"/>
        <end position="196"/>
    </location>
</feature>
<feature type="compositionally biased region" description="Basic and acidic residues" evidence="4">
    <location>
        <begin position="90"/>
        <end position="123"/>
    </location>
</feature>
<feature type="compositionally biased region" description="Basic and acidic residues" evidence="4">
    <location>
        <begin position="239"/>
        <end position="252"/>
    </location>
</feature>
<feature type="disulfide bond" description="Redox-active" evidence="1">
    <location>
        <begin position="152"/>
        <end position="154"/>
    </location>
</feature>
<feature type="disulfide bond" evidence="3">
    <location>
        <begin position="163"/>
        <end position="196"/>
    </location>
</feature>
<feature type="disulfide bond" evidence="3">
    <location>
        <begin position="173"/>
        <end position="186"/>
    </location>
</feature>
<feature type="sequence conflict" description="In Ref. 1; CAA21980." evidence="5" ref="1">
    <original>LS</original>
    <variation>FF</variation>
    <location>
        <begin position="24"/>
        <end position="25"/>
    </location>
</feature>
<feature type="sequence conflict" description="In Ref. 1; CAA21980." evidence="5" ref="1">
    <original>V</original>
    <variation>I</variation>
    <location>
        <position position="79"/>
    </location>
</feature>
<feature type="sequence conflict" description="In Ref. 1; CAA21980." evidence="5" ref="1">
    <original>N</original>
    <variation>D</variation>
    <location>
        <position position="124"/>
    </location>
</feature>
<feature type="sequence conflict" description="In Ref. 1; CAA21980." evidence="5" ref="1">
    <original>P</original>
    <variation>T</variation>
    <location>
        <position position="127"/>
    </location>
</feature>
<name>MIA40_CANAL</name>
<reference key="1">
    <citation type="submission" date="1998-11" db="EMBL/GenBank/DDBJ databases">
        <title>Candida albicans strain 1161 genome pilot sequencing project.</title>
        <authorList>
            <person name="Oliver K."/>
            <person name="Harris D."/>
            <person name="Barrell B.G."/>
            <person name="Rajandream M.A."/>
        </authorList>
    </citation>
    <scope>NUCLEOTIDE SEQUENCE [LARGE SCALE GENOMIC DNA]</scope>
    <source>
        <strain>1161</strain>
    </source>
</reference>
<reference key="2">
    <citation type="journal article" date="2004" name="Proc. Natl. Acad. Sci. U.S.A.">
        <title>The diploid genome sequence of Candida albicans.</title>
        <authorList>
            <person name="Jones T."/>
            <person name="Federspiel N.A."/>
            <person name="Chibana H."/>
            <person name="Dungan J."/>
            <person name="Kalman S."/>
            <person name="Magee B.B."/>
            <person name="Newport G."/>
            <person name="Thorstenson Y.R."/>
            <person name="Agabian N."/>
            <person name="Magee P.T."/>
            <person name="Davis R.W."/>
            <person name="Scherer S."/>
        </authorList>
    </citation>
    <scope>NUCLEOTIDE SEQUENCE [LARGE SCALE GENOMIC DNA]</scope>
    <source>
        <strain>SC5314 / ATCC MYA-2876</strain>
    </source>
</reference>
<reference key="3">
    <citation type="journal article" date="2007" name="Genome Biol.">
        <title>Assembly of the Candida albicans genome into sixteen supercontigs aligned on the eight chromosomes.</title>
        <authorList>
            <person name="van het Hoog M."/>
            <person name="Rast T.J."/>
            <person name="Martchenko M."/>
            <person name="Grindle S."/>
            <person name="Dignard D."/>
            <person name="Hogues H."/>
            <person name="Cuomo C."/>
            <person name="Berriman M."/>
            <person name="Scherer S."/>
            <person name="Magee B.B."/>
            <person name="Whiteway M."/>
            <person name="Chibana H."/>
            <person name="Nantel A."/>
            <person name="Magee P.T."/>
        </authorList>
    </citation>
    <scope>GENOME REANNOTATION</scope>
    <source>
        <strain>SC5314 / ATCC MYA-2876</strain>
    </source>
</reference>
<reference key="4">
    <citation type="journal article" date="2013" name="Genome Biol.">
        <title>Assembly of a phased diploid Candida albicans genome facilitates allele-specific measurements and provides a simple model for repeat and indel structure.</title>
        <authorList>
            <person name="Muzzey D."/>
            <person name="Schwartz K."/>
            <person name="Weissman J.S."/>
            <person name="Sherlock G."/>
        </authorList>
    </citation>
    <scope>NUCLEOTIDE SEQUENCE [LARGE SCALE GENOMIC DNA]</scope>
    <scope>GENOME REANNOTATION</scope>
    <source>
        <strain>SC5314 / ATCC MYA-2876</strain>
    </source>
</reference>